<accession>Q8DBE8</accession>
<comment type="function">
    <text evidence="1">Condensation of UDP-2,3-diacylglucosamine and 2,3-diacylglucosamine-1-phosphate to form lipid A disaccharide, a precursor of lipid A, a phosphorylated glycolipid that anchors the lipopolysaccharide to the outer membrane of the cell.</text>
</comment>
<comment type="catalytic activity">
    <reaction evidence="1">
        <text>a lipid X + a UDP-2-N,3-O-bis[(3R)-3-hydroxyacyl]-alpha-D-glucosamine = a lipid A disaccharide + UDP + H(+)</text>
        <dbReference type="Rhea" id="RHEA:67828"/>
        <dbReference type="ChEBI" id="CHEBI:15378"/>
        <dbReference type="ChEBI" id="CHEBI:58223"/>
        <dbReference type="ChEBI" id="CHEBI:137748"/>
        <dbReference type="ChEBI" id="CHEBI:176338"/>
        <dbReference type="ChEBI" id="CHEBI:176343"/>
        <dbReference type="EC" id="2.4.1.182"/>
    </reaction>
</comment>
<comment type="pathway">
    <text evidence="1">Bacterial outer membrane biogenesis; LPS lipid A biosynthesis.</text>
</comment>
<comment type="similarity">
    <text evidence="1">Belongs to the LpxB family.</text>
</comment>
<organism>
    <name type="scientific">Vibrio vulnificus (strain CMCP6)</name>
    <dbReference type="NCBI Taxonomy" id="216895"/>
    <lineage>
        <taxon>Bacteria</taxon>
        <taxon>Pseudomonadati</taxon>
        <taxon>Pseudomonadota</taxon>
        <taxon>Gammaproteobacteria</taxon>
        <taxon>Vibrionales</taxon>
        <taxon>Vibrionaceae</taxon>
        <taxon>Vibrio</taxon>
    </lineage>
</organism>
<feature type="chain" id="PRO_0000190190" description="Lipid-A-disaccharide synthase">
    <location>
        <begin position="1"/>
        <end position="380"/>
    </location>
</feature>
<gene>
    <name evidence="1" type="primary">lpxB</name>
    <name type="ordered locus">VV1_1873</name>
</gene>
<reference key="1">
    <citation type="submission" date="2002-12" db="EMBL/GenBank/DDBJ databases">
        <title>Complete genome sequence of Vibrio vulnificus CMCP6.</title>
        <authorList>
            <person name="Rhee J.H."/>
            <person name="Kim S.Y."/>
            <person name="Chung S.S."/>
            <person name="Kim J.J."/>
            <person name="Moon Y.H."/>
            <person name="Jeong H."/>
            <person name="Choy H.E."/>
        </authorList>
    </citation>
    <scope>NUCLEOTIDE SEQUENCE [LARGE SCALE GENOMIC DNA]</scope>
    <source>
        <strain>CMCP6</strain>
    </source>
</reference>
<evidence type="ECO:0000255" key="1">
    <source>
        <dbReference type="HAMAP-Rule" id="MF_00392"/>
    </source>
</evidence>
<keyword id="KW-0328">Glycosyltransferase</keyword>
<keyword id="KW-0441">Lipid A biosynthesis</keyword>
<keyword id="KW-0444">Lipid biosynthesis</keyword>
<keyword id="KW-0443">Lipid metabolism</keyword>
<keyword id="KW-0808">Transferase</keyword>
<sequence>MSNKPLRIGIVAGELSGDTLGEGFIKAIKAVHPDAEFVGIGGPKMIALGCQSLFDMEELAVMGLVEVLGRLPRLLKVKAELVRYFTENPPDVFVGIDAPDFNLRLELDLKNAGIKTVHYVSPSVWAWRQKRIFKIAKATHLVLAFLPFEKAFYDKFNVPCEFIGHTLADAIPLESDKAPARELLGLEQDKQWLAVLPGSRGSELKMLSQPFIETCKKLQQAFPELGFVVALVNQKRREQFEQAWKEYAPELDFKLVDDTARNVITASDAVMLASGTVALECMLLKRPMVVGYRVNAVTAFLAKRLLKTQYVSLPNILADTELVKEYLQDDCTPDNLFGEVSRLLEGDNHQMLDKFTEMHHWIRKDADQQAANAVLKLIEK</sequence>
<protein>
    <recommendedName>
        <fullName evidence="1">Lipid-A-disaccharide synthase</fullName>
        <ecNumber evidence="1">2.4.1.182</ecNumber>
    </recommendedName>
</protein>
<name>LPXB_VIBVU</name>
<proteinExistence type="inferred from homology"/>
<dbReference type="EC" id="2.4.1.182" evidence="1"/>
<dbReference type="EMBL" id="AE016795">
    <property type="protein sequence ID" value="AAO10275.1"/>
    <property type="molecule type" value="Genomic_DNA"/>
</dbReference>
<dbReference type="RefSeq" id="WP_011079775.1">
    <property type="nucleotide sequence ID" value="NC_004459.3"/>
</dbReference>
<dbReference type="SMR" id="Q8DBE8"/>
<dbReference type="CAZy" id="GT19">
    <property type="family name" value="Glycosyltransferase Family 19"/>
</dbReference>
<dbReference type="KEGG" id="vvu:VV1_1873"/>
<dbReference type="HOGENOM" id="CLU_036577_3_0_6"/>
<dbReference type="UniPathway" id="UPA00973"/>
<dbReference type="Proteomes" id="UP000002275">
    <property type="component" value="Chromosome 1"/>
</dbReference>
<dbReference type="GO" id="GO:0016020">
    <property type="term" value="C:membrane"/>
    <property type="evidence" value="ECO:0007669"/>
    <property type="project" value="GOC"/>
</dbReference>
<dbReference type="GO" id="GO:0008915">
    <property type="term" value="F:lipid-A-disaccharide synthase activity"/>
    <property type="evidence" value="ECO:0007669"/>
    <property type="project" value="UniProtKB-UniRule"/>
</dbReference>
<dbReference type="GO" id="GO:0005543">
    <property type="term" value="F:phospholipid binding"/>
    <property type="evidence" value="ECO:0007669"/>
    <property type="project" value="TreeGrafter"/>
</dbReference>
<dbReference type="GO" id="GO:0009245">
    <property type="term" value="P:lipid A biosynthetic process"/>
    <property type="evidence" value="ECO:0007669"/>
    <property type="project" value="UniProtKB-UniRule"/>
</dbReference>
<dbReference type="HAMAP" id="MF_00392">
    <property type="entry name" value="LpxB"/>
    <property type="match status" value="1"/>
</dbReference>
<dbReference type="InterPro" id="IPR003835">
    <property type="entry name" value="Glyco_trans_19"/>
</dbReference>
<dbReference type="NCBIfam" id="TIGR00215">
    <property type="entry name" value="lpxB"/>
    <property type="match status" value="1"/>
</dbReference>
<dbReference type="PANTHER" id="PTHR30372">
    <property type="entry name" value="LIPID-A-DISACCHARIDE SYNTHASE"/>
    <property type="match status" value="1"/>
</dbReference>
<dbReference type="PANTHER" id="PTHR30372:SF4">
    <property type="entry name" value="LIPID-A-DISACCHARIDE SYNTHASE, MITOCHONDRIAL-RELATED"/>
    <property type="match status" value="1"/>
</dbReference>
<dbReference type="Pfam" id="PF02684">
    <property type="entry name" value="LpxB"/>
    <property type="match status" value="1"/>
</dbReference>
<dbReference type="SUPFAM" id="SSF53756">
    <property type="entry name" value="UDP-Glycosyltransferase/glycogen phosphorylase"/>
    <property type="match status" value="1"/>
</dbReference>